<feature type="chain" id="PRO_0000184189" description="Transcriptional activator protein SolR">
    <location>
        <begin position="1"/>
        <end position="236"/>
    </location>
</feature>
<feature type="domain" description="HTH luxR-type" evidence="1">
    <location>
        <begin position="169"/>
        <end position="234"/>
    </location>
</feature>
<feature type="DNA-binding region" description="H-T-H motif" evidence="1">
    <location>
        <begin position="193"/>
        <end position="212"/>
    </location>
</feature>
<accession>P58590</accession>
<protein>
    <recommendedName>
        <fullName>Transcriptional activator protein SolR</fullName>
    </recommendedName>
</protein>
<comment type="similarity">
    <text evidence="2">Belongs to the autoinducer-regulated transcriptional regulatory protein family.</text>
</comment>
<keyword id="KW-0010">Activator</keyword>
<keyword id="KW-0071">Autoinducer synthesis</keyword>
<keyword id="KW-0238">DNA-binding</keyword>
<keyword id="KW-0673">Quorum sensing</keyword>
<keyword id="KW-1185">Reference proteome</keyword>
<keyword id="KW-0804">Transcription</keyword>
<keyword id="KW-0805">Transcription regulation</keyword>
<dbReference type="EMBL" id="AL646052">
    <property type="protein sequence ID" value="CAD17075.1"/>
    <property type="molecule type" value="Genomic_DNA"/>
</dbReference>
<dbReference type="RefSeq" id="WP_011003172.1">
    <property type="nucleotide sequence ID" value="NC_003295.1"/>
</dbReference>
<dbReference type="SMR" id="P58590"/>
<dbReference type="STRING" id="267608.RSc3287"/>
<dbReference type="EnsemblBacteria" id="CAD17075">
    <property type="protein sequence ID" value="CAD17075"/>
    <property type="gene ID" value="RSc3287"/>
</dbReference>
<dbReference type="KEGG" id="rso:RSc3287"/>
<dbReference type="eggNOG" id="COG2197">
    <property type="taxonomic scope" value="Bacteria"/>
</dbReference>
<dbReference type="HOGENOM" id="CLU_072786_7_0_4"/>
<dbReference type="Proteomes" id="UP000001436">
    <property type="component" value="Chromosome"/>
</dbReference>
<dbReference type="GO" id="GO:0003677">
    <property type="term" value="F:DNA binding"/>
    <property type="evidence" value="ECO:0007669"/>
    <property type="project" value="UniProtKB-KW"/>
</dbReference>
<dbReference type="GO" id="GO:0009372">
    <property type="term" value="P:quorum sensing"/>
    <property type="evidence" value="ECO:0007669"/>
    <property type="project" value="UniProtKB-KW"/>
</dbReference>
<dbReference type="GO" id="GO:0006355">
    <property type="term" value="P:regulation of DNA-templated transcription"/>
    <property type="evidence" value="ECO:0007669"/>
    <property type="project" value="InterPro"/>
</dbReference>
<dbReference type="CDD" id="cd06170">
    <property type="entry name" value="LuxR_C_like"/>
    <property type="match status" value="1"/>
</dbReference>
<dbReference type="Gene3D" id="3.30.450.80">
    <property type="entry name" value="Transcription factor LuxR-like, autoinducer-binding domain"/>
    <property type="match status" value="1"/>
</dbReference>
<dbReference type="Gene3D" id="1.10.10.10">
    <property type="entry name" value="Winged helix-like DNA-binding domain superfamily/Winged helix DNA-binding domain"/>
    <property type="match status" value="1"/>
</dbReference>
<dbReference type="InterPro" id="IPR016032">
    <property type="entry name" value="Sig_transdc_resp-reg_C-effctor"/>
</dbReference>
<dbReference type="InterPro" id="IPR005143">
    <property type="entry name" value="TF_LuxR_autoind-bd_dom"/>
</dbReference>
<dbReference type="InterPro" id="IPR036693">
    <property type="entry name" value="TF_LuxR_autoind-bd_dom_sf"/>
</dbReference>
<dbReference type="InterPro" id="IPR000792">
    <property type="entry name" value="Tscrpt_reg_LuxR_C"/>
</dbReference>
<dbReference type="InterPro" id="IPR036388">
    <property type="entry name" value="WH-like_DNA-bd_sf"/>
</dbReference>
<dbReference type="PANTHER" id="PTHR44688">
    <property type="entry name" value="DNA-BINDING TRANSCRIPTIONAL ACTIVATOR DEVR_DOSR"/>
    <property type="match status" value="1"/>
</dbReference>
<dbReference type="PANTHER" id="PTHR44688:SF25">
    <property type="entry name" value="HTH LUXR-TYPE DOMAIN-CONTAINING PROTEIN"/>
    <property type="match status" value="1"/>
</dbReference>
<dbReference type="Pfam" id="PF03472">
    <property type="entry name" value="Autoind_bind"/>
    <property type="match status" value="1"/>
</dbReference>
<dbReference type="Pfam" id="PF00196">
    <property type="entry name" value="GerE"/>
    <property type="match status" value="1"/>
</dbReference>
<dbReference type="PRINTS" id="PR00038">
    <property type="entry name" value="HTHLUXR"/>
</dbReference>
<dbReference type="SMART" id="SM00421">
    <property type="entry name" value="HTH_LUXR"/>
    <property type="match status" value="1"/>
</dbReference>
<dbReference type="SUPFAM" id="SSF46894">
    <property type="entry name" value="C-terminal effector domain of the bipartite response regulators"/>
    <property type="match status" value="1"/>
</dbReference>
<dbReference type="SUPFAM" id="SSF75516">
    <property type="entry name" value="Pheromone-binding domain of LuxR-like quorum-sensing transcription factors"/>
    <property type="match status" value="1"/>
</dbReference>
<dbReference type="PROSITE" id="PS00622">
    <property type="entry name" value="HTH_LUXR_1"/>
    <property type="match status" value="1"/>
</dbReference>
<dbReference type="PROSITE" id="PS50043">
    <property type="entry name" value="HTH_LUXR_2"/>
    <property type="match status" value="1"/>
</dbReference>
<gene>
    <name type="primary">solR</name>
    <name type="ordered locus">RSc3287</name>
    <name type="ORF">RS02516</name>
</gene>
<evidence type="ECO:0000255" key="1">
    <source>
        <dbReference type="PROSITE-ProRule" id="PRU00411"/>
    </source>
</evidence>
<evidence type="ECO:0000305" key="2"/>
<organism>
    <name type="scientific">Ralstonia nicotianae (strain ATCC BAA-1114 / GMI1000)</name>
    <name type="common">Ralstonia solanacearum</name>
    <dbReference type="NCBI Taxonomy" id="267608"/>
    <lineage>
        <taxon>Bacteria</taxon>
        <taxon>Pseudomonadati</taxon>
        <taxon>Pseudomonadota</taxon>
        <taxon>Betaproteobacteria</taxon>
        <taxon>Burkholderiales</taxon>
        <taxon>Burkholderiaceae</taxon>
        <taxon>Ralstonia</taxon>
        <taxon>Ralstonia solanacearum species complex</taxon>
    </lineage>
</organism>
<proteinExistence type="inferred from homology"/>
<reference key="1">
    <citation type="journal article" date="2002" name="Nature">
        <title>Genome sequence of the plant pathogen Ralstonia solanacearum.</title>
        <authorList>
            <person name="Salanoubat M."/>
            <person name="Genin S."/>
            <person name="Artiguenave F."/>
            <person name="Gouzy J."/>
            <person name="Mangenot S."/>
            <person name="Arlat M."/>
            <person name="Billault A."/>
            <person name="Brottier P."/>
            <person name="Camus J.-C."/>
            <person name="Cattolico L."/>
            <person name="Chandler M."/>
            <person name="Choisne N."/>
            <person name="Claudel-Renard C."/>
            <person name="Cunnac S."/>
            <person name="Demange N."/>
            <person name="Gaspin C."/>
            <person name="Lavie M."/>
            <person name="Moisan A."/>
            <person name="Robert C."/>
            <person name="Saurin W."/>
            <person name="Schiex T."/>
            <person name="Siguier P."/>
            <person name="Thebault P."/>
            <person name="Whalen M."/>
            <person name="Wincker P."/>
            <person name="Levy M."/>
            <person name="Weissenbach J."/>
            <person name="Boucher C.A."/>
        </authorList>
    </citation>
    <scope>NUCLEOTIDE SEQUENCE [LARGE SCALE GENOMIC DNA]</scope>
    <source>
        <strain>ATCC BAA-1114 / GMI1000</strain>
    </source>
</reference>
<name>SOLR_RALN1</name>
<sequence>MGPGFQDAYHAFHTAQDERQLFRQIASVVRQLGFDYCCYGIRVPLPVSKPAVAIFDTYPAGWMEHYQASGFLEIDPTVRTGASSSDLIIWPVSIRDEAARLWSDARDFGLNIGVARSSWTAHGAFGLLTLARRADPLTAAELEQLSATTNWLANLAHALMSPFLMPKLVPESSAALTAREREVLCWTGEGKTAYEIGQILRISERTVNFHVNNVLLKLAATNKVQAVVKAIAIGLI</sequence>